<keyword id="KW-0416">Keratin</keyword>
<keyword id="KW-1185">Reference proteome</keyword>
<keyword id="KW-0677">Repeat</keyword>
<sequence>MSYYSHLSGGLGCGLAVAVTMGRTVAVAEYGRCRHGCHSSYSAR</sequence>
<gene>
    <name type="primary">KRTAP20-4</name>
    <name type="synonym">KAP20.4</name>
</gene>
<name>KR204_HUMAN</name>
<feature type="chain" id="PRO_0000308250" description="Putative keratin-associated protein 20-4">
    <location>
        <begin position="1"/>
        <end position="44"/>
    </location>
</feature>
<dbReference type="EMBL" id="AB096956">
    <property type="protein sequence ID" value="BAE46371.1"/>
    <property type="molecule type" value="mRNA"/>
</dbReference>
<dbReference type="CCDS" id="CCDS86982.1"/>
<dbReference type="RefSeq" id="NP_001337906.1">
    <property type="nucleotide sequence ID" value="NM_001350977.1"/>
</dbReference>
<dbReference type="STRING" id="9606.ENSP00000372278"/>
<dbReference type="GlyGen" id="Q3LI62">
    <property type="glycosylation" value="1 site"/>
</dbReference>
<dbReference type="BioMuta" id="KRTAP20-4"/>
<dbReference type="PaxDb" id="9606-ENSP00000372278"/>
<dbReference type="Ensembl" id="ENST00000382828.2">
    <property type="protein sequence ID" value="ENSP00000372278.2"/>
    <property type="gene ID" value="ENSG00000206105.2"/>
</dbReference>
<dbReference type="GeneID" id="100151643"/>
<dbReference type="MANE-Select" id="ENST00000382828.2">
    <property type="protein sequence ID" value="ENSP00000372278.2"/>
    <property type="RefSeq nucleotide sequence ID" value="NM_001350977.1"/>
    <property type="RefSeq protein sequence ID" value="NP_001337906.1"/>
</dbReference>
<dbReference type="UCSC" id="uc011adf.2">
    <property type="organism name" value="human"/>
</dbReference>
<dbReference type="AGR" id="HGNC:34002"/>
<dbReference type="GeneCards" id="KRTAP20-4"/>
<dbReference type="HGNC" id="HGNC:34002">
    <property type="gene designation" value="KRTAP20-4"/>
</dbReference>
<dbReference type="HPA" id="ENSG00000206105">
    <property type="expression patterns" value="Tissue enriched (testis)"/>
</dbReference>
<dbReference type="neXtProt" id="NX_Q3LI62"/>
<dbReference type="VEuPathDB" id="HostDB:ENSG00000206105"/>
<dbReference type="eggNOG" id="ENOG502TEWP">
    <property type="taxonomic scope" value="Eukaryota"/>
</dbReference>
<dbReference type="GeneTree" id="ENSGT01000000215755"/>
<dbReference type="HOGENOM" id="CLU_3361965_0_0_1"/>
<dbReference type="InParanoid" id="Q3LI62"/>
<dbReference type="OrthoDB" id="10411021at2759"/>
<dbReference type="PAN-GO" id="Q3LI62">
    <property type="GO annotations" value="0 GO annotations based on evolutionary models"/>
</dbReference>
<dbReference type="Pharos" id="Q3LI62">
    <property type="development level" value="Tdark"/>
</dbReference>
<dbReference type="PRO" id="PR:Q3LI62"/>
<dbReference type="Proteomes" id="UP000005640">
    <property type="component" value="Chromosome 21"/>
</dbReference>
<dbReference type="Bgee" id="ENSG00000206105">
    <property type="expression patterns" value="Expressed in primordial germ cell in gonad and 24 other cell types or tissues"/>
</dbReference>
<dbReference type="GO" id="GO:0005882">
    <property type="term" value="C:intermediate filament"/>
    <property type="evidence" value="ECO:0007669"/>
    <property type="project" value="UniProtKB-KW"/>
</dbReference>
<comment type="function">
    <text evidence="1">In the hair cortex, hair keratin intermediate filaments are embedded in an interfilamentous matrix, consisting of hair keratin-associated proteins (KRTAP), which are essential for the formation of a rigid and resistant hair shaft through their extensive disulfide bond cross-linking with abundant cysteine residues of hair keratins. The matrix proteins include the high-sulfur and high-glycine-tyrosine keratins (By similarity).</text>
</comment>
<comment type="subunit">
    <text evidence="1">Interacts with hair keratins.</text>
</comment>
<comment type="similarity">
    <text evidence="2">Belongs to the KRTAP type 20 family.</text>
</comment>
<protein>
    <recommendedName>
        <fullName>Putative keratin-associated protein 20-4</fullName>
    </recommendedName>
</protein>
<reference key="1">
    <citation type="submission" date="2002-11" db="EMBL/GenBank/DDBJ databases">
        <title>Identification of complete keratin-associated protein (KAP) gene cluster spanning 800 kb region on human chromosome 21q22.11.</title>
        <authorList>
            <person name="Obayashi I."/>
            <person name="Shibuya K."/>
            <person name="Minoshima S."/>
            <person name="Kudoh J."/>
            <person name="Shimizu N."/>
        </authorList>
    </citation>
    <scope>NUCLEOTIDE SEQUENCE [MRNA]</scope>
    <source>
        <tissue>Hair root</tissue>
    </source>
</reference>
<evidence type="ECO:0000250" key="1"/>
<evidence type="ECO:0000305" key="2"/>
<proteinExistence type="inferred from homology"/>
<accession>Q3LI62</accession>
<organism>
    <name type="scientific">Homo sapiens</name>
    <name type="common">Human</name>
    <dbReference type="NCBI Taxonomy" id="9606"/>
    <lineage>
        <taxon>Eukaryota</taxon>
        <taxon>Metazoa</taxon>
        <taxon>Chordata</taxon>
        <taxon>Craniata</taxon>
        <taxon>Vertebrata</taxon>
        <taxon>Euteleostomi</taxon>
        <taxon>Mammalia</taxon>
        <taxon>Eutheria</taxon>
        <taxon>Euarchontoglires</taxon>
        <taxon>Primates</taxon>
        <taxon>Haplorrhini</taxon>
        <taxon>Catarrhini</taxon>
        <taxon>Hominidae</taxon>
        <taxon>Homo</taxon>
    </lineage>
</organism>